<evidence type="ECO:0000255" key="1">
    <source>
        <dbReference type="HAMAP-Rule" id="MF_01073"/>
    </source>
</evidence>
<feature type="chain" id="PRO_1000136674" description="Macrodomain Ter protein">
    <location>
        <begin position="1"/>
        <end position="150"/>
    </location>
</feature>
<organism>
    <name type="scientific">Salmonella dublin (strain CT_02021853)</name>
    <dbReference type="NCBI Taxonomy" id="439851"/>
    <lineage>
        <taxon>Bacteria</taxon>
        <taxon>Pseudomonadati</taxon>
        <taxon>Pseudomonadota</taxon>
        <taxon>Gammaproteobacteria</taxon>
        <taxon>Enterobacterales</taxon>
        <taxon>Enterobacteriaceae</taxon>
        <taxon>Salmonella</taxon>
    </lineage>
</organism>
<proteinExistence type="inferred from homology"/>
<sequence length="150" mass="17801">MKYQQLENLESGWKWKYLVKKHREGELITRYVEASAAQEAVNLLLALENEPVRVNVWIDRHMNPALLNRMKQTIRARRKRHFNAEHQHTRKKSIDLEFMVWQRLAGLAQRRGKTLSETIVQLIEDAEHKEKYATQMTTLKQDLQALLGKK</sequence>
<comment type="function">
    <text evidence="1">Required for spatial organization of the terminus region of the chromosome (Ter macrodomain) during the cell cycle. Prevents early segregation of duplicated Ter macrodomains during cell division. Binds specifically to matS, which is a 13 bp signature motif repeated within the Ter macrodomain.</text>
</comment>
<comment type="subunit">
    <text evidence="1">Homodimer.</text>
</comment>
<comment type="subcellular location">
    <subcellularLocation>
        <location evidence="1">Cytoplasm</location>
    </subcellularLocation>
</comment>
<comment type="similarity">
    <text evidence="1">Belongs to the MatP family.</text>
</comment>
<dbReference type="EMBL" id="CP001144">
    <property type="protein sequence ID" value="ACH77159.1"/>
    <property type="molecule type" value="Genomic_DNA"/>
</dbReference>
<dbReference type="RefSeq" id="WP_000877172.1">
    <property type="nucleotide sequence ID" value="NC_011205.1"/>
</dbReference>
<dbReference type="SMR" id="B5FQZ9"/>
<dbReference type="KEGG" id="sed:SeD_A1144"/>
<dbReference type="HOGENOM" id="CLU_142157_0_0_6"/>
<dbReference type="Proteomes" id="UP000008322">
    <property type="component" value="Chromosome"/>
</dbReference>
<dbReference type="GO" id="GO:0005737">
    <property type="term" value="C:cytoplasm"/>
    <property type="evidence" value="ECO:0007669"/>
    <property type="project" value="UniProtKB-SubCell"/>
</dbReference>
<dbReference type="GO" id="GO:0043565">
    <property type="term" value="F:sequence-specific DNA binding"/>
    <property type="evidence" value="ECO:0007669"/>
    <property type="project" value="UniProtKB-UniRule"/>
</dbReference>
<dbReference type="GO" id="GO:0051301">
    <property type="term" value="P:cell division"/>
    <property type="evidence" value="ECO:0007669"/>
    <property type="project" value="UniProtKB-UniRule"/>
</dbReference>
<dbReference type="GO" id="GO:0006355">
    <property type="term" value="P:regulation of DNA-templated transcription"/>
    <property type="evidence" value="ECO:0007669"/>
    <property type="project" value="InterPro"/>
</dbReference>
<dbReference type="Gene3D" id="1.20.1270.380">
    <property type="entry name" value="MatP, N-terminal domain"/>
    <property type="match status" value="1"/>
</dbReference>
<dbReference type="Gene3D" id="1.10.1220.10">
    <property type="entry name" value="Met repressor-like"/>
    <property type="match status" value="1"/>
</dbReference>
<dbReference type="HAMAP" id="MF_01073">
    <property type="entry name" value="MatP"/>
    <property type="match status" value="1"/>
</dbReference>
<dbReference type="InterPro" id="IPR013321">
    <property type="entry name" value="Arc_rbn_hlx_hlx"/>
</dbReference>
<dbReference type="InterPro" id="IPR009390">
    <property type="entry name" value="MatP"/>
</dbReference>
<dbReference type="InterPro" id="IPR035375">
    <property type="entry name" value="MatP_C"/>
</dbReference>
<dbReference type="InterPro" id="IPR035087">
    <property type="entry name" value="MatP_N"/>
</dbReference>
<dbReference type="InterPro" id="IPR038339">
    <property type="entry name" value="MatP_N_sf"/>
</dbReference>
<dbReference type="NCBIfam" id="NF003471">
    <property type="entry name" value="PRK05097.1"/>
    <property type="match status" value="1"/>
</dbReference>
<dbReference type="Pfam" id="PF06303">
    <property type="entry name" value="MatP"/>
    <property type="match status" value="1"/>
</dbReference>
<dbReference type="Pfam" id="PF17414">
    <property type="entry name" value="MatP_C"/>
    <property type="match status" value="1"/>
</dbReference>
<keyword id="KW-0131">Cell cycle</keyword>
<keyword id="KW-0132">Cell division</keyword>
<keyword id="KW-0963">Cytoplasm</keyword>
<keyword id="KW-0238">DNA-binding</keyword>
<name>MATP_SALDC</name>
<accession>B5FQZ9</accession>
<protein>
    <recommendedName>
        <fullName evidence="1">Macrodomain Ter protein</fullName>
    </recommendedName>
</protein>
<reference key="1">
    <citation type="journal article" date="2011" name="J. Bacteriol.">
        <title>Comparative genomics of 28 Salmonella enterica isolates: evidence for CRISPR-mediated adaptive sublineage evolution.</title>
        <authorList>
            <person name="Fricke W.F."/>
            <person name="Mammel M.K."/>
            <person name="McDermott P.F."/>
            <person name="Tartera C."/>
            <person name="White D.G."/>
            <person name="Leclerc J.E."/>
            <person name="Ravel J."/>
            <person name="Cebula T.A."/>
        </authorList>
    </citation>
    <scope>NUCLEOTIDE SEQUENCE [LARGE SCALE GENOMIC DNA]</scope>
    <source>
        <strain>CT_02021853</strain>
    </source>
</reference>
<gene>
    <name evidence="1" type="primary">matP</name>
    <name type="ordered locus">SeD_A1144</name>
</gene>